<protein>
    <recommendedName>
        <fullName evidence="4">6-deoxy-6-sulfo-D-fructose transketolase subunit SqwG</fullName>
        <ecNumber evidence="2">2.2.1.15</ecNumber>
    </recommendedName>
</protein>
<feature type="chain" id="PRO_0000458937" description="6-deoxy-6-sulfo-D-fructose transketolase subunit SqwG">
    <location>
        <begin position="1"/>
        <end position="275"/>
    </location>
</feature>
<sequence>MSEQQIDLQHQANVIRKLTLEEIGKLGVGHVGGSLSICEVLAALYFRLMKIDPHNPGWPERDRLVLSKGHGGPALYAALALKGYFPIELLDTLNRPGTMLPSHCDMRRTVGIDMTTGSLGQGFSAAVGMALAVQMDHLPNTIYTIIGDGESDEGQIWEAAMFAGGRRLDHLIAFTDYNKMQIDGYTQEINPLEPLEDKWRAFGWHVQSIDGHNTDEIVSAVEQAKRAQGKPSMILLNTIKGKGASFSEGKLASHNMKLTEEMWKAAVAELEKEGA</sequence>
<reference key="1">
    <citation type="submission" date="2012-05" db="EMBL/GenBank/DDBJ databases">
        <authorList>
            <person name="Harkins D.M."/>
            <person name="Madupu R."/>
            <person name="Durkin A.S."/>
            <person name="Torralba M."/>
            <person name="Methe B."/>
            <person name="Sutton G.G."/>
            <person name="Nelson K.E."/>
        </authorList>
    </citation>
    <scope>NUCLEOTIDE SEQUENCE [LARGE SCALE GENOMIC DNA]</scope>
    <source>
        <strain>MSTE9</strain>
    </source>
</reference>
<reference key="2">
    <citation type="journal article" date="2021" name="ACS Catal.">
        <title>Mechanistically diverse pathways for sulfoquinovose degradation in bacteria.</title>
        <authorList>
            <person name="Liu J."/>
            <person name="Wei Y."/>
            <person name="Ma K."/>
            <person name="An J."/>
            <person name="Liu X."/>
            <person name="Liu Y."/>
            <person name="Ang E.L."/>
            <person name="Zhao H."/>
            <person name="Zhang Y."/>
        </authorList>
    </citation>
    <scope>FUNCTION</scope>
    <scope>CATALYTIC ACTIVITY</scope>
    <scope>SUBUNIT</scope>
    <source>
        <strain>MSTE9</strain>
    </source>
</reference>
<dbReference type="EC" id="2.2.1.15" evidence="2"/>
<dbReference type="EMBL" id="AKFU01000044">
    <property type="protein sequence ID" value="EJF39099.1"/>
    <property type="molecule type" value="Genomic_DNA"/>
</dbReference>
<dbReference type="RefSeq" id="WP_009065245.1">
    <property type="nucleotide sequence ID" value="NZ_AKFU01000044.1"/>
</dbReference>
<dbReference type="SMR" id="J0MXK0"/>
<dbReference type="STRING" id="1105031.HMPREF1141_0615"/>
<dbReference type="PATRIC" id="fig|1105031.3.peg.2807"/>
<dbReference type="eggNOG" id="COG3959">
    <property type="taxonomic scope" value="Bacteria"/>
</dbReference>
<dbReference type="BioCyc" id="MetaCyc:MONOMER-21937"/>
<dbReference type="Proteomes" id="UP000004073">
    <property type="component" value="Unassembled WGS sequence"/>
</dbReference>
<dbReference type="GO" id="GO:0016740">
    <property type="term" value="F:transferase activity"/>
    <property type="evidence" value="ECO:0007669"/>
    <property type="project" value="UniProtKB-KW"/>
</dbReference>
<dbReference type="CDD" id="cd02012">
    <property type="entry name" value="TPP_TK"/>
    <property type="match status" value="1"/>
</dbReference>
<dbReference type="Gene3D" id="3.40.50.970">
    <property type="match status" value="1"/>
</dbReference>
<dbReference type="InterPro" id="IPR029061">
    <property type="entry name" value="THDP-binding"/>
</dbReference>
<dbReference type="InterPro" id="IPR005474">
    <property type="entry name" value="Transketolase_N"/>
</dbReference>
<dbReference type="PANTHER" id="PTHR47514">
    <property type="entry name" value="TRANSKETOLASE N-TERMINAL SECTION-RELATED"/>
    <property type="match status" value="1"/>
</dbReference>
<dbReference type="PANTHER" id="PTHR47514:SF1">
    <property type="entry name" value="TRANSKETOLASE N-TERMINAL SECTION-RELATED"/>
    <property type="match status" value="1"/>
</dbReference>
<dbReference type="Pfam" id="PF00456">
    <property type="entry name" value="Transketolase_N"/>
    <property type="match status" value="1"/>
</dbReference>
<dbReference type="SUPFAM" id="SSF52518">
    <property type="entry name" value="Thiamin diphosphate-binding fold (THDP-binding)"/>
    <property type="match status" value="1"/>
</dbReference>
<evidence type="ECO:0000250" key="1">
    <source>
        <dbReference type="UniProtKB" id="P29401"/>
    </source>
</evidence>
<evidence type="ECO:0000269" key="2">
    <source ref="2"/>
</evidence>
<evidence type="ECO:0000303" key="3">
    <source ref="2"/>
</evidence>
<evidence type="ECO:0000305" key="4"/>
<evidence type="ECO:0000312" key="5">
    <source>
        <dbReference type="EMBL" id="EJF39099.1"/>
    </source>
</evidence>
<organism>
    <name type="scientific">Clostridium sp. (strain MSTE9)</name>
    <dbReference type="NCBI Taxonomy" id="1105031"/>
    <lineage>
        <taxon>Bacteria</taxon>
        <taxon>Bacillati</taxon>
        <taxon>Bacillota</taxon>
        <taxon>Clostridia</taxon>
        <taxon>Eubacteriales</taxon>
        <taxon>Clostridiaceae</taxon>
        <taxon>Clostridium</taxon>
    </lineage>
</organism>
<gene>
    <name evidence="3" type="primary">sqwG</name>
    <name evidence="5" type="ORF">HMPREF1141_0615</name>
</gene>
<accession>J0MXK0</accession>
<proteinExistence type="evidence at protein level"/>
<keyword id="KW-0119">Carbohydrate metabolism</keyword>
<keyword id="KW-1185">Reference proteome</keyword>
<keyword id="KW-0786">Thiamine pyrophosphate</keyword>
<keyword id="KW-0808">Transferase</keyword>
<name>SQWG_CLOS9</name>
<comment type="function">
    <text evidence="2">Part of the sulfo-TK pathway, a D-sulfoquinovose degradation pathway that produces 2-hydroxyethane-1-sulfonate (isethionate) (Ref.2). Catalyzes two steps of the pathway: the formation of 4-deoxy-4-sulfoerythrose (SE) and xylulose 5-phosphate from 6-deoxy-6-sulfo-D-fructose (SF) and glyceraldehyde 3-phosphate, and the formation of sulfoacetaldehyde (SA) and xylulose 5-phosphate from 4-deoxy-4-sulfo-D-erythrulose (SEu) and glyceraldehyde 3-phosphate (Ref.2).</text>
</comment>
<comment type="catalytic activity">
    <reaction evidence="2">
        <text>6-deoxy-6-sulfo-D-fructose + D-glyceraldehyde 3-phosphate = 4-deoxy-4-sulfo-D-erythrose + D-xylulose 5-phosphate</text>
        <dbReference type="Rhea" id="RHEA:70803"/>
        <dbReference type="ChEBI" id="CHEBI:57737"/>
        <dbReference type="ChEBI" id="CHEBI:59776"/>
        <dbReference type="ChEBI" id="CHEBI:77133"/>
        <dbReference type="ChEBI" id="CHEBI:189857"/>
        <dbReference type="EC" id="2.2.1.15"/>
    </reaction>
    <physiologicalReaction direction="left-to-right" evidence="2">
        <dbReference type="Rhea" id="RHEA:70804"/>
    </physiologicalReaction>
</comment>
<comment type="catalytic activity">
    <reaction evidence="2">
        <text>4-deoxy-4-sulfo-D-erythrulose + D-glyceraldehyde 3-phosphate = sulfoacetaldehyde + D-xylulose 5-phosphate</text>
        <dbReference type="Rhea" id="RHEA:70811"/>
        <dbReference type="ChEBI" id="CHEBI:57737"/>
        <dbReference type="ChEBI" id="CHEBI:58246"/>
        <dbReference type="ChEBI" id="CHEBI:59776"/>
        <dbReference type="ChEBI" id="CHEBI:190015"/>
        <dbReference type="EC" id="2.2.1.15"/>
    </reaction>
    <physiologicalReaction direction="left-to-right" evidence="2">
        <dbReference type="Rhea" id="RHEA:70812"/>
    </physiologicalReaction>
</comment>
<comment type="cofactor">
    <cofactor evidence="1">
        <name>thiamine diphosphate</name>
        <dbReference type="ChEBI" id="CHEBI:58937"/>
    </cofactor>
</comment>
<comment type="subunit">
    <text evidence="2">Forms a complex with SqwH.</text>
</comment>
<comment type="similarity">
    <text evidence="4">Belongs to the transketolase family.</text>
</comment>